<dbReference type="EC" id="6.3.5.2" evidence="1"/>
<dbReference type="EMBL" id="CP000727">
    <property type="protein sequence ID" value="ABS36422.1"/>
    <property type="molecule type" value="Genomic_DNA"/>
</dbReference>
<dbReference type="EMBL" id="AM412317">
    <property type="protein sequence ID" value="CAL84853.1"/>
    <property type="molecule type" value="Genomic_DNA"/>
</dbReference>
<dbReference type="RefSeq" id="WP_012048241.1">
    <property type="nucleotide sequence ID" value="NC_009698.1"/>
</dbReference>
<dbReference type="RefSeq" id="YP_001255779.1">
    <property type="nucleotide sequence ID" value="NC_009495.1"/>
</dbReference>
<dbReference type="RefSeq" id="YP_001389019.1">
    <property type="nucleotide sequence ID" value="NC_009698.1"/>
</dbReference>
<dbReference type="SMR" id="A5I720"/>
<dbReference type="MEROPS" id="C26.957"/>
<dbReference type="GeneID" id="5187511"/>
<dbReference type="KEGG" id="cbh:CLC_3237"/>
<dbReference type="KEGG" id="cbo:CBO3295"/>
<dbReference type="PATRIC" id="fig|413999.7.peg.3271"/>
<dbReference type="HOGENOM" id="CLU_014340_0_5_9"/>
<dbReference type="UniPathway" id="UPA00189">
    <property type="reaction ID" value="UER00296"/>
</dbReference>
<dbReference type="PRO" id="PR:A5I720"/>
<dbReference type="Proteomes" id="UP000001986">
    <property type="component" value="Chromosome"/>
</dbReference>
<dbReference type="GO" id="GO:0005829">
    <property type="term" value="C:cytosol"/>
    <property type="evidence" value="ECO:0000318"/>
    <property type="project" value="GO_Central"/>
</dbReference>
<dbReference type="GO" id="GO:0005524">
    <property type="term" value="F:ATP binding"/>
    <property type="evidence" value="ECO:0007669"/>
    <property type="project" value="UniProtKB-UniRule"/>
</dbReference>
<dbReference type="GO" id="GO:0003921">
    <property type="term" value="F:GMP synthase activity"/>
    <property type="evidence" value="ECO:0000318"/>
    <property type="project" value="GO_Central"/>
</dbReference>
<dbReference type="GO" id="GO:0006177">
    <property type="term" value="P:GMP biosynthetic process"/>
    <property type="evidence" value="ECO:0000318"/>
    <property type="project" value="GO_Central"/>
</dbReference>
<dbReference type="CDD" id="cd01742">
    <property type="entry name" value="GATase1_GMP_Synthase"/>
    <property type="match status" value="1"/>
</dbReference>
<dbReference type="CDD" id="cd01997">
    <property type="entry name" value="GMP_synthase_C"/>
    <property type="match status" value="1"/>
</dbReference>
<dbReference type="FunFam" id="3.30.300.10:FF:000002">
    <property type="entry name" value="GMP synthase [glutamine-hydrolyzing]"/>
    <property type="match status" value="1"/>
</dbReference>
<dbReference type="FunFam" id="3.40.50.620:FF:000001">
    <property type="entry name" value="GMP synthase [glutamine-hydrolyzing]"/>
    <property type="match status" value="1"/>
</dbReference>
<dbReference type="FunFam" id="3.40.50.880:FF:000001">
    <property type="entry name" value="GMP synthase [glutamine-hydrolyzing]"/>
    <property type="match status" value="1"/>
</dbReference>
<dbReference type="Gene3D" id="3.30.300.10">
    <property type="match status" value="1"/>
</dbReference>
<dbReference type="Gene3D" id="3.40.50.880">
    <property type="match status" value="1"/>
</dbReference>
<dbReference type="Gene3D" id="3.40.50.620">
    <property type="entry name" value="HUPs"/>
    <property type="match status" value="1"/>
</dbReference>
<dbReference type="HAMAP" id="MF_00344">
    <property type="entry name" value="GMP_synthase"/>
    <property type="match status" value="1"/>
</dbReference>
<dbReference type="InterPro" id="IPR029062">
    <property type="entry name" value="Class_I_gatase-like"/>
</dbReference>
<dbReference type="InterPro" id="IPR017926">
    <property type="entry name" value="GATASE"/>
</dbReference>
<dbReference type="InterPro" id="IPR001674">
    <property type="entry name" value="GMP_synth_C"/>
</dbReference>
<dbReference type="InterPro" id="IPR004739">
    <property type="entry name" value="GMP_synth_GATase"/>
</dbReference>
<dbReference type="InterPro" id="IPR022955">
    <property type="entry name" value="GMP_synthase"/>
</dbReference>
<dbReference type="InterPro" id="IPR025777">
    <property type="entry name" value="GMPS_ATP_PPase_dom"/>
</dbReference>
<dbReference type="InterPro" id="IPR022310">
    <property type="entry name" value="NAD/GMP_synthase"/>
</dbReference>
<dbReference type="InterPro" id="IPR014729">
    <property type="entry name" value="Rossmann-like_a/b/a_fold"/>
</dbReference>
<dbReference type="NCBIfam" id="TIGR00884">
    <property type="entry name" value="guaA_Cterm"/>
    <property type="match status" value="1"/>
</dbReference>
<dbReference type="NCBIfam" id="TIGR00888">
    <property type="entry name" value="guaA_Nterm"/>
    <property type="match status" value="1"/>
</dbReference>
<dbReference type="NCBIfam" id="NF000848">
    <property type="entry name" value="PRK00074.1"/>
    <property type="match status" value="1"/>
</dbReference>
<dbReference type="PANTHER" id="PTHR11922:SF2">
    <property type="entry name" value="GMP SYNTHASE [GLUTAMINE-HYDROLYZING]"/>
    <property type="match status" value="1"/>
</dbReference>
<dbReference type="PANTHER" id="PTHR11922">
    <property type="entry name" value="GMP SYNTHASE-RELATED"/>
    <property type="match status" value="1"/>
</dbReference>
<dbReference type="Pfam" id="PF00117">
    <property type="entry name" value="GATase"/>
    <property type="match status" value="1"/>
</dbReference>
<dbReference type="Pfam" id="PF00958">
    <property type="entry name" value="GMP_synt_C"/>
    <property type="match status" value="1"/>
</dbReference>
<dbReference type="Pfam" id="PF02540">
    <property type="entry name" value="NAD_synthase"/>
    <property type="match status" value="1"/>
</dbReference>
<dbReference type="PRINTS" id="PR00099">
    <property type="entry name" value="CPSGATASE"/>
</dbReference>
<dbReference type="PRINTS" id="PR00096">
    <property type="entry name" value="GATASE"/>
</dbReference>
<dbReference type="SUPFAM" id="SSF52402">
    <property type="entry name" value="Adenine nucleotide alpha hydrolases-like"/>
    <property type="match status" value="1"/>
</dbReference>
<dbReference type="SUPFAM" id="SSF52317">
    <property type="entry name" value="Class I glutamine amidotransferase-like"/>
    <property type="match status" value="1"/>
</dbReference>
<dbReference type="PROSITE" id="PS51273">
    <property type="entry name" value="GATASE_TYPE_1"/>
    <property type="match status" value="1"/>
</dbReference>
<dbReference type="PROSITE" id="PS51553">
    <property type="entry name" value="GMPS_ATP_PPASE"/>
    <property type="match status" value="1"/>
</dbReference>
<accession>A5I720</accession>
<accession>A7G8A4</accession>
<comment type="function">
    <text evidence="1">Catalyzes the synthesis of GMP from XMP.</text>
</comment>
<comment type="catalytic activity">
    <reaction evidence="1">
        <text>XMP + L-glutamine + ATP + H2O = GMP + L-glutamate + AMP + diphosphate + 2 H(+)</text>
        <dbReference type="Rhea" id="RHEA:11680"/>
        <dbReference type="ChEBI" id="CHEBI:15377"/>
        <dbReference type="ChEBI" id="CHEBI:15378"/>
        <dbReference type="ChEBI" id="CHEBI:29985"/>
        <dbReference type="ChEBI" id="CHEBI:30616"/>
        <dbReference type="ChEBI" id="CHEBI:33019"/>
        <dbReference type="ChEBI" id="CHEBI:57464"/>
        <dbReference type="ChEBI" id="CHEBI:58115"/>
        <dbReference type="ChEBI" id="CHEBI:58359"/>
        <dbReference type="ChEBI" id="CHEBI:456215"/>
        <dbReference type="EC" id="6.3.5.2"/>
    </reaction>
</comment>
<comment type="pathway">
    <text evidence="1">Purine metabolism; GMP biosynthesis; GMP from XMP (L-Gln route): step 1/1.</text>
</comment>
<comment type="subunit">
    <text evidence="1">Homodimer.</text>
</comment>
<feature type="chain" id="PRO_1000120258" description="GMP synthase [glutamine-hydrolyzing]">
    <location>
        <begin position="1"/>
        <end position="510"/>
    </location>
</feature>
<feature type="domain" description="Glutamine amidotransferase type-1" evidence="1">
    <location>
        <begin position="5"/>
        <end position="195"/>
    </location>
</feature>
<feature type="domain" description="GMPS ATP-PPase" evidence="1">
    <location>
        <begin position="196"/>
        <end position="385"/>
    </location>
</feature>
<feature type="active site" description="Nucleophile" evidence="1">
    <location>
        <position position="82"/>
    </location>
</feature>
<feature type="active site" evidence="1">
    <location>
        <position position="169"/>
    </location>
</feature>
<feature type="active site" evidence="1">
    <location>
        <position position="171"/>
    </location>
</feature>
<feature type="binding site" evidence="1">
    <location>
        <begin position="223"/>
        <end position="229"/>
    </location>
    <ligand>
        <name>ATP</name>
        <dbReference type="ChEBI" id="CHEBI:30616"/>
    </ligand>
</feature>
<keyword id="KW-0067">ATP-binding</keyword>
<keyword id="KW-0315">Glutamine amidotransferase</keyword>
<keyword id="KW-0332">GMP biosynthesis</keyword>
<keyword id="KW-0436">Ligase</keyword>
<keyword id="KW-0547">Nucleotide-binding</keyword>
<keyword id="KW-0658">Purine biosynthesis</keyword>
<keyword id="KW-1185">Reference proteome</keyword>
<reference key="1">
    <citation type="journal article" date="2007" name="Genome Res.">
        <title>Genome sequence of a proteolytic (Group I) Clostridium botulinum strain Hall A and comparative analysis of the clostridial genomes.</title>
        <authorList>
            <person name="Sebaihia M."/>
            <person name="Peck M.W."/>
            <person name="Minton N.P."/>
            <person name="Thomson N.R."/>
            <person name="Holden M.T.G."/>
            <person name="Mitchell W.J."/>
            <person name="Carter A.T."/>
            <person name="Bentley S.D."/>
            <person name="Mason D.R."/>
            <person name="Crossman L."/>
            <person name="Paul C.J."/>
            <person name="Ivens A."/>
            <person name="Wells-Bennik M.H.J."/>
            <person name="Davis I.J."/>
            <person name="Cerdeno-Tarraga A.M."/>
            <person name="Churcher C."/>
            <person name="Quail M.A."/>
            <person name="Chillingworth T."/>
            <person name="Feltwell T."/>
            <person name="Fraser A."/>
            <person name="Goodhead I."/>
            <person name="Hance Z."/>
            <person name="Jagels K."/>
            <person name="Larke N."/>
            <person name="Maddison M."/>
            <person name="Moule S."/>
            <person name="Mungall K."/>
            <person name="Norbertczak H."/>
            <person name="Rabbinowitsch E."/>
            <person name="Sanders M."/>
            <person name="Simmonds M."/>
            <person name="White B."/>
            <person name="Whithead S."/>
            <person name="Parkhill J."/>
        </authorList>
    </citation>
    <scope>NUCLEOTIDE SEQUENCE [LARGE SCALE GENOMIC DNA]</scope>
    <source>
        <strain>Hall / ATCC 3502 / NCTC 13319 / Type A</strain>
    </source>
</reference>
<reference key="2">
    <citation type="journal article" date="2007" name="PLoS ONE">
        <title>Analysis of the neurotoxin complex genes in Clostridium botulinum A1-A4 and B1 strains: BoNT/A3, /Ba4 and /B1 clusters are located within plasmids.</title>
        <authorList>
            <person name="Smith T.J."/>
            <person name="Hill K.K."/>
            <person name="Foley B.T."/>
            <person name="Detter J.C."/>
            <person name="Munk A.C."/>
            <person name="Bruce D.C."/>
            <person name="Doggett N.A."/>
            <person name="Smith L.A."/>
            <person name="Marks J.D."/>
            <person name="Xie G."/>
            <person name="Brettin T.S."/>
        </authorList>
    </citation>
    <scope>NUCLEOTIDE SEQUENCE [LARGE SCALE GENOMIC DNA]</scope>
    <source>
        <strain>Hall / ATCC 3502 / NCTC 13319 / Type A</strain>
    </source>
</reference>
<protein>
    <recommendedName>
        <fullName evidence="1">GMP synthase [glutamine-hydrolyzing]</fullName>
        <ecNumber evidence="1">6.3.5.2</ecNumber>
    </recommendedName>
    <alternativeName>
        <fullName evidence="1">GMP synthetase</fullName>
    </alternativeName>
    <alternativeName>
        <fullName evidence="1">Glutamine amidotransferase</fullName>
    </alternativeName>
</protein>
<proteinExistence type="inferred from homology"/>
<gene>
    <name evidence="1" type="primary">guaA</name>
    <name type="ordered locus">CBO3295</name>
    <name type="ordered locus">CLC_3237</name>
</gene>
<organism>
    <name type="scientific">Clostridium botulinum (strain Hall / ATCC 3502 / NCTC 13319 / Type A)</name>
    <dbReference type="NCBI Taxonomy" id="441771"/>
    <lineage>
        <taxon>Bacteria</taxon>
        <taxon>Bacillati</taxon>
        <taxon>Bacillota</taxon>
        <taxon>Clostridia</taxon>
        <taxon>Eubacteriales</taxon>
        <taxon>Clostridiaceae</taxon>
        <taxon>Clostridium</taxon>
    </lineage>
</organism>
<name>GUAA_CLOBH</name>
<evidence type="ECO:0000255" key="1">
    <source>
        <dbReference type="HAMAP-Rule" id="MF_00344"/>
    </source>
</evidence>
<sequence length="510" mass="57513">MNKELVLVVDFGGQYNQLIARRVRENRVYCEIVPYTTSIEDIKEKAPKGIIFTGGPNSVYGENAPRVQKELFDLGIPVLGICYGDQLMAHSLEGEVTSPEKREYGKTDVNLDNSSLLFKDMKEKDQCWMSHTDYISKVPKGFKIIATTDECPCAAMENAEKKLYGVQFHPEVEHTLFGKKMLKNFLFNVCNLKGDWSMSSFAEQQIKAIKEKVGDKKVICALSGGVDSSVAAVIVHKAIGKQLTCVFVDHGLLRKDEGDQVERIFKDQFDMNLIRVNAQDRFLGKLKGVSDPERKRKIIGEEFIRVFEEEAKKLGDISFLVQGTIYPDIVESGTNTSATIKSHHNVGGLPEDMEFKLIEPLRELFKDEVRAVGEELGIPHKLVWRQPFPGPGLAIRVLGEVTEEKLAITREADAIFREEIAKAGLEEKIWQYFACLPNIQSVGVMGDERTYCHTIALRAVTSSDAMTSDWARIPYEVLDKVSRRIVNEVKEVNRIVYDVTSKPPATIEWE</sequence>